<sequence length="424" mass="50354">MTTMISNLPRVLIEEIFFRVPLKSLRAVRLTCKSWNTLSKSRSFRKLYISKRATREEESMMIAMMNFDLYSMRVVVDDDVDPSKAFKKKRNKKSIAFKRQPIFLDEQVKISQVFHCEGLLLCFLKEDDTRVVVWNPYCGQTRWIQLRYSHRPHKDRFIYALGYKDKESRGSFQLLRFVDYFLGAPKNQYFWYEIYDFNSDSWTTLDVTPHWCIYCCDRGVSLNGNTYWCAKERKAEDDIVDHIISFDFTNERFGPLLPLPSKVMEHEYEIVTLSYVKEEKLAALFQHYEADWNEFDIWITTKIDAEVVSWSMFLRMDTGPRIEVPHICEGFFIDEEKKVAMGFEEDFDRKTFIIIGEAGYVRKLDIKAHVDRKCRPTVCSYVPSLVQIKKPARGKRKRQSSLEKRLFDQNMLRLEAFKKLGGYF</sequence>
<dbReference type="EMBL" id="AC005499">
    <property type="protein sequence ID" value="AAC67359.1"/>
    <property type="molecule type" value="Genomic_DNA"/>
</dbReference>
<dbReference type="EMBL" id="CP002685">
    <property type="protein sequence ID" value="AEC09553.1"/>
    <property type="molecule type" value="Genomic_DNA"/>
</dbReference>
<dbReference type="EMBL" id="DQ069845">
    <property type="status" value="NOT_ANNOTATED_CDS"/>
    <property type="molecule type" value="mRNA"/>
</dbReference>
<dbReference type="PIR" id="H84806">
    <property type="entry name" value="H84806"/>
</dbReference>
<dbReference type="RefSeq" id="NP_181393.1">
    <property type="nucleotide sequence ID" value="NM_129416.2"/>
</dbReference>
<dbReference type="STRING" id="3702.Q9ZVI1"/>
<dbReference type="PaxDb" id="3702-AT2G38590.1"/>
<dbReference type="EnsemblPlants" id="AT2G38590.1">
    <property type="protein sequence ID" value="AT2G38590.1"/>
    <property type="gene ID" value="AT2G38590"/>
</dbReference>
<dbReference type="GeneID" id="818441"/>
<dbReference type="Gramene" id="AT2G38590.1">
    <property type="protein sequence ID" value="AT2G38590.1"/>
    <property type="gene ID" value="AT2G38590"/>
</dbReference>
<dbReference type="KEGG" id="ath:AT2G38590"/>
<dbReference type="Araport" id="AT2G38590"/>
<dbReference type="TAIR" id="AT2G38590"/>
<dbReference type="HOGENOM" id="CLU_034692_0_0_1"/>
<dbReference type="InParanoid" id="Q9ZVI1"/>
<dbReference type="OMA" id="DLYSMRV"/>
<dbReference type="PhylomeDB" id="Q9ZVI1"/>
<dbReference type="PRO" id="PR:Q9ZVI1"/>
<dbReference type="Proteomes" id="UP000006548">
    <property type="component" value="Chromosome 2"/>
</dbReference>
<dbReference type="ExpressionAtlas" id="Q9ZVI1">
    <property type="expression patterns" value="baseline and differential"/>
</dbReference>
<dbReference type="GO" id="GO:0005829">
    <property type="term" value="C:cytosol"/>
    <property type="evidence" value="ECO:0007005"/>
    <property type="project" value="TAIR"/>
</dbReference>
<dbReference type="CDD" id="cd22157">
    <property type="entry name" value="F-box_AtFBW1-like"/>
    <property type="match status" value="1"/>
</dbReference>
<dbReference type="Gene3D" id="1.20.1280.50">
    <property type="match status" value="1"/>
</dbReference>
<dbReference type="InterPro" id="IPR006527">
    <property type="entry name" value="F-box-assoc_dom_typ1"/>
</dbReference>
<dbReference type="InterPro" id="IPR017451">
    <property type="entry name" value="F-box-assoc_interact_dom"/>
</dbReference>
<dbReference type="InterPro" id="IPR036047">
    <property type="entry name" value="F-box-like_dom_sf"/>
</dbReference>
<dbReference type="InterPro" id="IPR001810">
    <property type="entry name" value="F-box_dom"/>
</dbReference>
<dbReference type="InterPro" id="IPR011043">
    <property type="entry name" value="Gal_Oxase/kelch_b-propeller"/>
</dbReference>
<dbReference type="InterPro" id="IPR050796">
    <property type="entry name" value="SCF_F-box_component"/>
</dbReference>
<dbReference type="NCBIfam" id="TIGR01640">
    <property type="entry name" value="F_box_assoc_1"/>
    <property type="match status" value="1"/>
</dbReference>
<dbReference type="PANTHER" id="PTHR31672">
    <property type="entry name" value="BNACNNG10540D PROTEIN"/>
    <property type="match status" value="1"/>
</dbReference>
<dbReference type="PANTHER" id="PTHR31672:SF13">
    <property type="entry name" value="F-BOX PROTEIN CPR30-LIKE"/>
    <property type="match status" value="1"/>
</dbReference>
<dbReference type="Pfam" id="PF00646">
    <property type="entry name" value="F-box"/>
    <property type="match status" value="1"/>
</dbReference>
<dbReference type="Pfam" id="PF07734">
    <property type="entry name" value="FBA_1"/>
    <property type="match status" value="1"/>
</dbReference>
<dbReference type="SMART" id="SM00256">
    <property type="entry name" value="FBOX"/>
    <property type="match status" value="1"/>
</dbReference>
<dbReference type="SUPFAM" id="SSF81383">
    <property type="entry name" value="F-box domain"/>
    <property type="match status" value="1"/>
</dbReference>
<dbReference type="SUPFAM" id="SSF50965">
    <property type="entry name" value="Galactose oxidase, central domain"/>
    <property type="match status" value="1"/>
</dbReference>
<dbReference type="PROSITE" id="PS50181">
    <property type="entry name" value="FBOX"/>
    <property type="match status" value="1"/>
</dbReference>
<keyword id="KW-1185">Reference proteome</keyword>
<evidence type="ECO:0000255" key="1">
    <source>
        <dbReference type="PROSITE-ProRule" id="PRU00080"/>
    </source>
</evidence>
<evidence type="ECO:0000305" key="2"/>
<gene>
    <name type="ordered locus">At2g38590</name>
    <name type="ORF">T6A23.21</name>
</gene>
<organism>
    <name type="scientific">Arabidopsis thaliana</name>
    <name type="common">Mouse-ear cress</name>
    <dbReference type="NCBI Taxonomy" id="3702"/>
    <lineage>
        <taxon>Eukaryota</taxon>
        <taxon>Viridiplantae</taxon>
        <taxon>Streptophyta</taxon>
        <taxon>Embryophyta</taxon>
        <taxon>Tracheophyta</taxon>
        <taxon>Spermatophyta</taxon>
        <taxon>Magnoliopsida</taxon>
        <taxon>eudicotyledons</taxon>
        <taxon>Gunneridae</taxon>
        <taxon>Pentapetalae</taxon>
        <taxon>rosids</taxon>
        <taxon>malvids</taxon>
        <taxon>Brassicales</taxon>
        <taxon>Brassicaceae</taxon>
        <taxon>Camelineae</taxon>
        <taxon>Arabidopsis</taxon>
    </lineage>
</organism>
<accession>Q9ZVI1</accession>
<proteinExistence type="evidence at transcript level"/>
<protein>
    <recommendedName>
        <fullName>F-box protein At2g38590</fullName>
    </recommendedName>
</protein>
<name>FB323_ARATH</name>
<feature type="chain" id="PRO_0000396038" description="F-box protein At2g38590">
    <location>
        <begin position="1"/>
        <end position="424"/>
    </location>
</feature>
<feature type="domain" description="F-box" evidence="1">
    <location>
        <begin position="2"/>
        <end position="47"/>
    </location>
</feature>
<feature type="sequence conflict" description="In Ref. 3; DQ069845." evidence="2" ref="3">
    <original>S</original>
    <variation>G</variation>
    <location>
        <position position="34"/>
    </location>
</feature>
<feature type="sequence conflict" description="In Ref. 3; DQ069845." evidence="2" ref="3">
    <original>E</original>
    <variation>G</variation>
    <location>
        <position position="279"/>
    </location>
</feature>
<feature type="sequence conflict" description="In Ref. 3; DQ069845." evidence="2" ref="3">
    <original>M</original>
    <variation>L</variation>
    <location>
        <position position="341"/>
    </location>
</feature>
<reference key="1">
    <citation type="journal article" date="1999" name="Nature">
        <title>Sequence and analysis of chromosome 2 of the plant Arabidopsis thaliana.</title>
        <authorList>
            <person name="Lin X."/>
            <person name="Kaul S."/>
            <person name="Rounsley S.D."/>
            <person name="Shea T.P."/>
            <person name="Benito M.-I."/>
            <person name="Town C.D."/>
            <person name="Fujii C.Y."/>
            <person name="Mason T.M."/>
            <person name="Bowman C.L."/>
            <person name="Barnstead M.E."/>
            <person name="Feldblyum T.V."/>
            <person name="Buell C.R."/>
            <person name="Ketchum K.A."/>
            <person name="Lee J.J."/>
            <person name="Ronning C.M."/>
            <person name="Koo H.L."/>
            <person name="Moffat K.S."/>
            <person name="Cronin L.A."/>
            <person name="Shen M."/>
            <person name="Pai G."/>
            <person name="Van Aken S."/>
            <person name="Umayam L."/>
            <person name="Tallon L.J."/>
            <person name="Gill J.E."/>
            <person name="Adams M.D."/>
            <person name="Carrera A.J."/>
            <person name="Creasy T.H."/>
            <person name="Goodman H.M."/>
            <person name="Somerville C.R."/>
            <person name="Copenhaver G.P."/>
            <person name="Preuss D."/>
            <person name="Nierman W.C."/>
            <person name="White O."/>
            <person name="Eisen J.A."/>
            <person name="Salzberg S.L."/>
            <person name="Fraser C.M."/>
            <person name="Venter J.C."/>
        </authorList>
    </citation>
    <scope>NUCLEOTIDE SEQUENCE [LARGE SCALE GENOMIC DNA]</scope>
    <source>
        <strain>cv. Columbia</strain>
    </source>
</reference>
<reference key="2">
    <citation type="journal article" date="2017" name="Plant J.">
        <title>Araport11: a complete reannotation of the Arabidopsis thaliana reference genome.</title>
        <authorList>
            <person name="Cheng C.Y."/>
            <person name="Krishnakumar V."/>
            <person name="Chan A.P."/>
            <person name="Thibaud-Nissen F."/>
            <person name="Schobel S."/>
            <person name="Town C.D."/>
        </authorList>
    </citation>
    <scope>GENOME REANNOTATION</scope>
    <source>
        <strain>cv. Columbia</strain>
    </source>
</reference>
<reference key="3">
    <citation type="journal article" date="2005" name="Plant Physiol.">
        <title>Analysis of the cDNAs of hypothetical genes on Arabidopsis chromosome 2 reveals numerous transcript variants.</title>
        <authorList>
            <person name="Xiao Y.-L."/>
            <person name="Smith S.R."/>
            <person name="Ishmael N."/>
            <person name="Redman J.C."/>
            <person name="Kumar N."/>
            <person name="Monaghan E.L."/>
            <person name="Ayele M."/>
            <person name="Haas B.J."/>
            <person name="Wu H.C."/>
            <person name="Town C.D."/>
        </authorList>
    </citation>
    <scope>NUCLEOTIDE SEQUENCE [LARGE SCALE MRNA]</scope>
    <source>
        <strain>cv. Columbia</strain>
    </source>
</reference>